<organism>
    <name type="scientific">Roseiflexus castenholzii (strain DSM 13941 / HLO8)</name>
    <dbReference type="NCBI Taxonomy" id="383372"/>
    <lineage>
        <taxon>Bacteria</taxon>
        <taxon>Bacillati</taxon>
        <taxon>Chloroflexota</taxon>
        <taxon>Chloroflexia</taxon>
        <taxon>Chloroflexales</taxon>
        <taxon>Roseiflexineae</taxon>
        <taxon>Roseiflexaceae</taxon>
        <taxon>Roseiflexus</taxon>
    </lineage>
</organism>
<evidence type="ECO:0000255" key="1">
    <source>
        <dbReference type="HAMAP-Rule" id="MF_00059"/>
    </source>
</evidence>
<accession>A7NR36</accession>
<name>RPOA_ROSCS</name>
<reference key="1">
    <citation type="submission" date="2007-08" db="EMBL/GenBank/DDBJ databases">
        <title>Complete sequence of Roseiflexus castenholzii DSM 13941.</title>
        <authorList>
            <consortium name="US DOE Joint Genome Institute"/>
            <person name="Copeland A."/>
            <person name="Lucas S."/>
            <person name="Lapidus A."/>
            <person name="Barry K."/>
            <person name="Glavina del Rio T."/>
            <person name="Dalin E."/>
            <person name="Tice H."/>
            <person name="Pitluck S."/>
            <person name="Thompson L.S."/>
            <person name="Brettin T."/>
            <person name="Bruce D."/>
            <person name="Detter J.C."/>
            <person name="Han C."/>
            <person name="Tapia R."/>
            <person name="Schmutz J."/>
            <person name="Larimer F."/>
            <person name="Land M."/>
            <person name="Hauser L."/>
            <person name="Kyrpides N."/>
            <person name="Mikhailova N."/>
            <person name="Bryant D.A."/>
            <person name="Hanada S."/>
            <person name="Tsukatani Y."/>
            <person name="Richardson P."/>
        </authorList>
    </citation>
    <scope>NUCLEOTIDE SEQUENCE [LARGE SCALE GENOMIC DNA]</scope>
    <source>
        <strain>DSM 13941 / HLO8</strain>
    </source>
</reference>
<feature type="chain" id="PRO_1000075015" description="DNA-directed RNA polymerase subunit alpha">
    <location>
        <begin position="1"/>
        <end position="323"/>
    </location>
</feature>
<feature type="region of interest" description="Alpha N-terminal domain (alpha-NTD)" evidence="1">
    <location>
        <begin position="1"/>
        <end position="225"/>
    </location>
</feature>
<feature type="region of interest" description="Alpha C-terminal domain (alpha-CTD)" evidence="1">
    <location>
        <begin position="243"/>
        <end position="323"/>
    </location>
</feature>
<gene>
    <name evidence="1" type="primary">rpoA</name>
    <name type="ordered locus">Rcas_3999</name>
</gene>
<comment type="function">
    <text evidence="1">DNA-dependent RNA polymerase catalyzes the transcription of DNA into RNA using the four ribonucleoside triphosphates as substrates.</text>
</comment>
<comment type="catalytic activity">
    <reaction evidence="1">
        <text>RNA(n) + a ribonucleoside 5'-triphosphate = RNA(n+1) + diphosphate</text>
        <dbReference type="Rhea" id="RHEA:21248"/>
        <dbReference type="Rhea" id="RHEA-COMP:14527"/>
        <dbReference type="Rhea" id="RHEA-COMP:17342"/>
        <dbReference type="ChEBI" id="CHEBI:33019"/>
        <dbReference type="ChEBI" id="CHEBI:61557"/>
        <dbReference type="ChEBI" id="CHEBI:140395"/>
        <dbReference type="EC" id="2.7.7.6"/>
    </reaction>
</comment>
<comment type="subunit">
    <text evidence="1">Homodimer. The RNAP catalytic core consists of 2 alpha, 1 beta, 1 beta' and 1 omega subunit. When a sigma factor is associated with the core the holoenzyme is formed, which can initiate transcription.</text>
</comment>
<comment type="domain">
    <text evidence="1">The N-terminal domain is essential for RNAP assembly and basal transcription, whereas the C-terminal domain is involved in interaction with transcriptional regulators and with upstream promoter elements.</text>
</comment>
<comment type="similarity">
    <text evidence="1">Belongs to the RNA polymerase alpha chain family.</text>
</comment>
<sequence length="323" mass="35526">MLDIAMPKIEVVTAAENYGRFKIEPLDPGYGHTLGNALRRVLLSSIPGAAITKIKIDGVFHEFSTISGIKEDVTEIVLNIKGVRLRSYAERPVKISLSKRGSGIVRAADIDAPSNVEIVNPFHYICTIDRDDAMLEMEMTVERGRGYLPADQRDALPIGEIPIDAIFTPVPKVNYVVENIRVGQATDFDSLLIEIWTDGTIKPGDALSHAAQVLVQYSQTIADFNRLSTETESTAAPNGLAIPADIYDTPIEELDLSTRTYNCLKRADITKVGQVLEMDEKALLSVRNLGQKSMEEIRDKLIERGYIPRIGQTTNSSPAGIES</sequence>
<proteinExistence type="inferred from homology"/>
<dbReference type="EC" id="2.7.7.6" evidence="1"/>
<dbReference type="EMBL" id="CP000804">
    <property type="protein sequence ID" value="ABU60032.1"/>
    <property type="molecule type" value="Genomic_DNA"/>
</dbReference>
<dbReference type="RefSeq" id="WP_012122455.1">
    <property type="nucleotide sequence ID" value="NC_009767.1"/>
</dbReference>
<dbReference type="SMR" id="A7NR36"/>
<dbReference type="STRING" id="383372.Rcas_3999"/>
<dbReference type="KEGG" id="rca:Rcas_3999"/>
<dbReference type="eggNOG" id="COG0202">
    <property type="taxonomic scope" value="Bacteria"/>
</dbReference>
<dbReference type="HOGENOM" id="CLU_053084_0_1_0"/>
<dbReference type="OrthoDB" id="9805706at2"/>
<dbReference type="Proteomes" id="UP000000263">
    <property type="component" value="Chromosome"/>
</dbReference>
<dbReference type="GO" id="GO:0005737">
    <property type="term" value="C:cytoplasm"/>
    <property type="evidence" value="ECO:0007669"/>
    <property type="project" value="UniProtKB-ARBA"/>
</dbReference>
<dbReference type="GO" id="GO:0000428">
    <property type="term" value="C:DNA-directed RNA polymerase complex"/>
    <property type="evidence" value="ECO:0007669"/>
    <property type="project" value="UniProtKB-KW"/>
</dbReference>
<dbReference type="GO" id="GO:0003677">
    <property type="term" value="F:DNA binding"/>
    <property type="evidence" value="ECO:0007669"/>
    <property type="project" value="UniProtKB-UniRule"/>
</dbReference>
<dbReference type="GO" id="GO:0003899">
    <property type="term" value="F:DNA-directed RNA polymerase activity"/>
    <property type="evidence" value="ECO:0007669"/>
    <property type="project" value="UniProtKB-UniRule"/>
</dbReference>
<dbReference type="GO" id="GO:0046983">
    <property type="term" value="F:protein dimerization activity"/>
    <property type="evidence" value="ECO:0007669"/>
    <property type="project" value="InterPro"/>
</dbReference>
<dbReference type="GO" id="GO:0006351">
    <property type="term" value="P:DNA-templated transcription"/>
    <property type="evidence" value="ECO:0007669"/>
    <property type="project" value="UniProtKB-UniRule"/>
</dbReference>
<dbReference type="CDD" id="cd06928">
    <property type="entry name" value="RNAP_alpha_NTD"/>
    <property type="match status" value="1"/>
</dbReference>
<dbReference type="FunFam" id="2.170.120.12:FF:000001">
    <property type="entry name" value="DNA-directed RNA polymerase subunit alpha"/>
    <property type="match status" value="1"/>
</dbReference>
<dbReference type="Gene3D" id="1.10.150.20">
    <property type="entry name" value="5' to 3' exonuclease, C-terminal subdomain"/>
    <property type="match status" value="1"/>
</dbReference>
<dbReference type="Gene3D" id="2.170.120.12">
    <property type="entry name" value="DNA-directed RNA polymerase, insert domain"/>
    <property type="match status" value="1"/>
</dbReference>
<dbReference type="Gene3D" id="3.30.1360.10">
    <property type="entry name" value="RNA polymerase, RBP11-like subunit"/>
    <property type="match status" value="1"/>
</dbReference>
<dbReference type="HAMAP" id="MF_00059">
    <property type="entry name" value="RNApol_bact_RpoA"/>
    <property type="match status" value="1"/>
</dbReference>
<dbReference type="InterPro" id="IPR011262">
    <property type="entry name" value="DNA-dir_RNA_pol_insert"/>
</dbReference>
<dbReference type="InterPro" id="IPR011263">
    <property type="entry name" value="DNA-dir_RNA_pol_RpoA/D/Rpb3"/>
</dbReference>
<dbReference type="InterPro" id="IPR011773">
    <property type="entry name" value="DNA-dir_RpoA"/>
</dbReference>
<dbReference type="InterPro" id="IPR036603">
    <property type="entry name" value="RBP11-like"/>
</dbReference>
<dbReference type="InterPro" id="IPR011260">
    <property type="entry name" value="RNAP_asu_C"/>
</dbReference>
<dbReference type="InterPro" id="IPR036643">
    <property type="entry name" value="RNApol_insert_sf"/>
</dbReference>
<dbReference type="NCBIfam" id="NF003513">
    <property type="entry name" value="PRK05182.1-2"/>
    <property type="match status" value="1"/>
</dbReference>
<dbReference type="NCBIfam" id="NF003519">
    <property type="entry name" value="PRK05182.2-5"/>
    <property type="match status" value="1"/>
</dbReference>
<dbReference type="NCBIfam" id="TIGR02027">
    <property type="entry name" value="rpoA"/>
    <property type="match status" value="1"/>
</dbReference>
<dbReference type="Pfam" id="PF01000">
    <property type="entry name" value="RNA_pol_A_bac"/>
    <property type="match status" value="1"/>
</dbReference>
<dbReference type="Pfam" id="PF03118">
    <property type="entry name" value="RNA_pol_A_CTD"/>
    <property type="match status" value="1"/>
</dbReference>
<dbReference type="Pfam" id="PF01193">
    <property type="entry name" value="RNA_pol_L"/>
    <property type="match status" value="1"/>
</dbReference>
<dbReference type="SMART" id="SM00662">
    <property type="entry name" value="RPOLD"/>
    <property type="match status" value="1"/>
</dbReference>
<dbReference type="SUPFAM" id="SSF47789">
    <property type="entry name" value="C-terminal domain of RNA polymerase alpha subunit"/>
    <property type="match status" value="1"/>
</dbReference>
<dbReference type="SUPFAM" id="SSF56553">
    <property type="entry name" value="Insert subdomain of RNA polymerase alpha subunit"/>
    <property type="match status" value="1"/>
</dbReference>
<dbReference type="SUPFAM" id="SSF55257">
    <property type="entry name" value="RBP11-like subunits of RNA polymerase"/>
    <property type="match status" value="1"/>
</dbReference>
<keyword id="KW-0240">DNA-directed RNA polymerase</keyword>
<keyword id="KW-0548">Nucleotidyltransferase</keyword>
<keyword id="KW-1185">Reference proteome</keyword>
<keyword id="KW-0804">Transcription</keyword>
<keyword id="KW-0808">Transferase</keyword>
<protein>
    <recommendedName>
        <fullName evidence="1">DNA-directed RNA polymerase subunit alpha</fullName>
        <shortName evidence="1">RNAP subunit alpha</shortName>
        <ecNumber evidence="1">2.7.7.6</ecNumber>
    </recommendedName>
    <alternativeName>
        <fullName evidence="1">RNA polymerase subunit alpha</fullName>
    </alternativeName>
    <alternativeName>
        <fullName evidence="1">Transcriptase subunit alpha</fullName>
    </alternativeName>
</protein>